<evidence type="ECO:0000250" key="1"/>
<evidence type="ECO:0000305" key="2"/>
<protein>
    <recommendedName>
        <fullName>Serine acetyltransferase</fullName>
        <shortName>SAT</shortName>
        <ecNumber>2.3.1.30</ecNumber>
    </recommendedName>
</protein>
<proteinExistence type="inferred from homology"/>
<comment type="catalytic activity">
    <reaction>
        <text>L-serine + acetyl-CoA = O-acetyl-L-serine + CoA</text>
        <dbReference type="Rhea" id="RHEA:24560"/>
        <dbReference type="ChEBI" id="CHEBI:33384"/>
        <dbReference type="ChEBI" id="CHEBI:57287"/>
        <dbReference type="ChEBI" id="CHEBI:57288"/>
        <dbReference type="ChEBI" id="CHEBI:58340"/>
        <dbReference type="EC" id="2.3.1.30"/>
    </reaction>
</comment>
<comment type="pathway">
    <text>Amino-acid biosynthesis; L-cysteine biosynthesis; L-cysteine from L-serine: step 1/2.</text>
</comment>
<comment type="subcellular location">
    <subcellularLocation>
        <location evidence="1">Cytoplasm</location>
    </subcellularLocation>
</comment>
<comment type="similarity">
    <text evidence="2">Belongs to the transferase hexapeptide repeat family.</text>
</comment>
<reference key="1">
    <citation type="journal article" date="1996" name="Arch. Microbiol.">
        <title>Identification of two classes of transcriptional regulator genes in the cyanobacterium Synechococcus sp. strain PCC 7942.</title>
        <authorList>
            <person name="Anandan S."/>
            <person name="Nalty M.S."/>
            <person name="Cogdell D.E."/>
            <person name="Golden S.S."/>
        </authorList>
    </citation>
    <scope>NUCLEOTIDE SEQUENCE [GENOMIC DNA]</scope>
</reference>
<reference key="2">
    <citation type="submission" date="2005-08" db="EMBL/GenBank/DDBJ databases">
        <title>Complete sequence of chromosome 1 of Synechococcus elongatus PCC 7942.</title>
        <authorList>
            <consortium name="US DOE Joint Genome Institute"/>
            <person name="Copeland A."/>
            <person name="Lucas S."/>
            <person name="Lapidus A."/>
            <person name="Barry K."/>
            <person name="Detter J.C."/>
            <person name="Glavina T."/>
            <person name="Hammon N."/>
            <person name="Israni S."/>
            <person name="Pitluck S."/>
            <person name="Schmutz J."/>
            <person name="Larimer F."/>
            <person name="Land M."/>
            <person name="Kyrpides N."/>
            <person name="Lykidis A."/>
            <person name="Golden S."/>
            <person name="Richardson P."/>
        </authorList>
    </citation>
    <scope>NUCLEOTIDE SEQUENCE [LARGE SCALE GENOMIC DNA]</scope>
    <source>
        <strain>ATCC 33912 / PCC 7942 / FACHB-805</strain>
    </source>
</reference>
<name>CYSE_SYNE7</name>
<dbReference type="EC" id="2.3.1.30"/>
<dbReference type="EMBL" id="L41665">
    <property type="protein sequence ID" value="AAB38543.1"/>
    <property type="molecule type" value="Genomic_DNA"/>
</dbReference>
<dbReference type="EMBL" id="CP000100">
    <property type="protein sequence ID" value="ABB58450.1"/>
    <property type="molecule type" value="Genomic_DNA"/>
</dbReference>
<dbReference type="RefSeq" id="WP_011243996.1">
    <property type="nucleotide sequence ID" value="NZ_JACJTX010000001.1"/>
</dbReference>
<dbReference type="SMR" id="Q56002"/>
<dbReference type="STRING" id="1140.Synpcc7942_2420"/>
<dbReference type="PaxDb" id="1140-Synpcc7942_2420"/>
<dbReference type="GeneID" id="72431309"/>
<dbReference type="KEGG" id="syf:Synpcc7942_2420"/>
<dbReference type="eggNOG" id="COG1045">
    <property type="taxonomic scope" value="Bacteria"/>
</dbReference>
<dbReference type="HOGENOM" id="CLU_051638_10_0_3"/>
<dbReference type="OrthoDB" id="9801456at2"/>
<dbReference type="BioCyc" id="SYNEL:SYNPCC7942_2420-MONOMER"/>
<dbReference type="UniPathway" id="UPA00136">
    <property type="reaction ID" value="UER00199"/>
</dbReference>
<dbReference type="Proteomes" id="UP000889800">
    <property type="component" value="Chromosome"/>
</dbReference>
<dbReference type="GO" id="GO:0031470">
    <property type="term" value="C:carboxysome"/>
    <property type="evidence" value="ECO:0007669"/>
    <property type="project" value="UniProtKB-ARBA"/>
</dbReference>
<dbReference type="GO" id="GO:0005737">
    <property type="term" value="C:cytoplasm"/>
    <property type="evidence" value="ECO:0007669"/>
    <property type="project" value="UniProtKB-SubCell"/>
</dbReference>
<dbReference type="GO" id="GO:0009001">
    <property type="term" value="F:serine O-acetyltransferase activity"/>
    <property type="evidence" value="ECO:0007669"/>
    <property type="project" value="UniProtKB-EC"/>
</dbReference>
<dbReference type="GO" id="GO:0043886">
    <property type="term" value="F:structural constituent of carboxysome shell"/>
    <property type="evidence" value="ECO:0007669"/>
    <property type="project" value="UniProtKB-ARBA"/>
</dbReference>
<dbReference type="GO" id="GO:0006535">
    <property type="term" value="P:cysteine biosynthetic process from serine"/>
    <property type="evidence" value="ECO:0007669"/>
    <property type="project" value="InterPro"/>
</dbReference>
<dbReference type="CDD" id="cd03354">
    <property type="entry name" value="LbH_SAT"/>
    <property type="match status" value="1"/>
</dbReference>
<dbReference type="FunFam" id="1.10.3130.10:FF:000003">
    <property type="entry name" value="Serine acetyltransferase"/>
    <property type="match status" value="1"/>
</dbReference>
<dbReference type="FunFam" id="2.160.10.10:FF:000007">
    <property type="entry name" value="Serine acetyltransferase"/>
    <property type="match status" value="1"/>
</dbReference>
<dbReference type="Gene3D" id="2.160.10.10">
    <property type="entry name" value="Hexapeptide repeat proteins"/>
    <property type="match status" value="1"/>
</dbReference>
<dbReference type="Gene3D" id="1.10.3130.10">
    <property type="entry name" value="serine acetyltransferase, domain 1"/>
    <property type="match status" value="1"/>
</dbReference>
<dbReference type="InterPro" id="IPR001451">
    <property type="entry name" value="Hexapep"/>
</dbReference>
<dbReference type="InterPro" id="IPR018357">
    <property type="entry name" value="Hexapep_transf_CS"/>
</dbReference>
<dbReference type="InterPro" id="IPR045304">
    <property type="entry name" value="LbH_SAT"/>
</dbReference>
<dbReference type="InterPro" id="IPR042122">
    <property type="entry name" value="Ser_AcTrfase_N_sf"/>
</dbReference>
<dbReference type="InterPro" id="IPR005881">
    <property type="entry name" value="Ser_O-AcTrfase"/>
</dbReference>
<dbReference type="InterPro" id="IPR053376">
    <property type="entry name" value="Serine_acetyltransferase"/>
</dbReference>
<dbReference type="InterPro" id="IPR011004">
    <property type="entry name" value="Trimer_LpxA-like_sf"/>
</dbReference>
<dbReference type="NCBIfam" id="TIGR01172">
    <property type="entry name" value="cysE"/>
    <property type="match status" value="1"/>
</dbReference>
<dbReference type="NCBIfam" id="NF041874">
    <property type="entry name" value="EPS_EpsC"/>
    <property type="match status" value="1"/>
</dbReference>
<dbReference type="PANTHER" id="PTHR42811">
    <property type="entry name" value="SERINE ACETYLTRANSFERASE"/>
    <property type="match status" value="1"/>
</dbReference>
<dbReference type="Pfam" id="PF00132">
    <property type="entry name" value="Hexapep"/>
    <property type="match status" value="1"/>
</dbReference>
<dbReference type="PIRSF" id="PIRSF000441">
    <property type="entry name" value="CysE"/>
    <property type="match status" value="1"/>
</dbReference>
<dbReference type="SUPFAM" id="SSF51161">
    <property type="entry name" value="Trimeric LpxA-like enzymes"/>
    <property type="match status" value="1"/>
</dbReference>
<dbReference type="PROSITE" id="PS00101">
    <property type="entry name" value="HEXAPEP_TRANSFERASES"/>
    <property type="match status" value="1"/>
</dbReference>
<gene>
    <name type="primary">cysE</name>
    <name type="ordered locus">Synpcc7942_2420</name>
</gene>
<organism>
    <name type="scientific">Synechococcus elongatus (strain ATCC 33912 / PCC 7942 / FACHB-805)</name>
    <name type="common">Anacystis nidulans R2</name>
    <dbReference type="NCBI Taxonomy" id="1140"/>
    <lineage>
        <taxon>Bacteria</taxon>
        <taxon>Bacillati</taxon>
        <taxon>Cyanobacteriota</taxon>
        <taxon>Cyanophyceae</taxon>
        <taxon>Synechococcales</taxon>
        <taxon>Synechococcaceae</taxon>
        <taxon>Synechococcus</taxon>
    </lineage>
</organism>
<keyword id="KW-0012">Acyltransferase</keyword>
<keyword id="KW-0028">Amino-acid biosynthesis</keyword>
<keyword id="KW-0198">Cysteine biosynthesis</keyword>
<keyword id="KW-0963">Cytoplasm</keyword>
<keyword id="KW-1185">Reference proteome</keyword>
<keyword id="KW-0677">Repeat</keyword>
<keyword id="KW-0808">Transferase</keyword>
<sequence>MFKTLAADFRIIFERDPAARNGLEVLLCYPGFQALVCHRVAHWLYQQRLPVIPRLLSHLSRLLTGVEIHPGARLGQGIFIDHGMGVVIGETAIVGDYCLIYQGVTLGGTGKQSGKRHPTLANNVVVGAGAKVLGNIQIGENVRIGAGSVVLRDVPSDCTVVGIPGRVIYRSGVRVDPLDHSQMPDSEARVIRMLLDRIEALEDQLEGLNLPPAEEAIDVTLAPVGDRCQLRDRTIEEFLDGAGI</sequence>
<accession>Q56002</accession>
<accession>Q31KG9</accession>
<feature type="chain" id="PRO_0000068686" description="Serine acetyltransferase">
    <location>
        <begin position="1"/>
        <end position="244"/>
    </location>
</feature>